<proteinExistence type="inferred from homology"/>
<dbReference type="EMBL" id="CP001616">
    <property type="protein sequence ID" value="ACQ92812.1"/>
    <property type="molecule type" value="Genomic_DNA"/>
</dbReference>
<dbReference type="RefSeq" id="WP_012729411.1">
    <property type="nucleotide sequence ID" value="NC_012691.1"/>
</dbReference>
<dbReference type="SMR" id="C4LDL6"/>
<dbReference type="STRING" id="595494.Tola_1192"/>
<dbReference type="KEGG" id="tau:Tola_1192"/>
<dbReference type="eggNOG" id="COG2060">
    <property type="taxonomic scope" value="Bacteria"/>
</dbReference>
<dbReference type="HOGENOM" id="CLU_018614_3_0_6"/>
<dbReference type="OrthoDB" id="9763796at2"/>
<dbReference type="Proteomes" id="UP000009073">
    <property type="component" value="Chromosome"/>
</dbReference>
<dbReference type="GO" id="GO:0005886">
    <property type="term" value="C:plasma membrane"/>
    <property type="evidence" value="ECO:0007669"/>
    <property type="project" value="UniProtKB-SubCell"/>
</dbReference>
<dbReference type="GO" id="GO:0008556">
    <property type="term" value="F:P-type potassium transmembrane transporter activity"/>
    <property type="evidence" value="ECO:0007669"/>
    <property type="project" value="InterPro"/>
</dbReference>
<dbReference type="GO" id="GO:0030955">
    <property type="term" value="F:potassium ion binding"/>
    <property type="evidence" value="ECO:0007669"/>
    <property type="project" value="UniProtKB-UniRule"/>
</dbReference>
<dbReference type="HAMAP" id="MF_00275">
    <property type="entry name" value="KdpA"/>
    <property type="match status" value="1"/>
</dbReference>
<dbReference type="InterPro" id="IPR004623">
    <property type="entry name" value="KdpA"/>
</dbReference>
<dbReference type="NCBIfam" id="TIGR00680">
    <property type="entry name" value="kdpA"/>
    <property type="match status" value="1"/>
</dbReference>
<dbReference type="PANTHER" id="PTHR30607">
    <property type="entry name" value="POTASSIUM-TRANSPORTING ATPASE A CHAIN"/>
    <property type="match status" value="1"/>
</dbReference>
<dbReference type="PANTHER" id="PTHR30607:SF2">
    <property type="entry name" value="POTASSIUM-TRANSPORTING ATPASE POTASSIUM-BINDING SUBUNIT"/>
    <property type="match status" value="1"/>
</dbReference>
<dbReference type="Pfam" id="PF03814">
    <property type="entry name" value="KdpA"/>
    <property type="match status" value="1"/>
</dbReference>
<dbReference type="PIRSF" id="PIRSF001294">
    <property type="entry name" value="K_ATPaseA"/>
    <property type="match status" value="1"/>
</dbReference>
<feature type="chain" id="PRO_1000204790" description="Potassium-transporting ATPase potassium-binding subunit">
    <location>
        <begin position="1"/>
        <end position="566"/>
    </location>
</feature>
<feature type="transmembrane region" description="Helical" evidence="1">
    <location>
        <begin position="6"/>
        <end position="26"/>
    </location>
</feature>
<feature type="transmembrane region" description="Helical" evidence="1">
    <location>
        <begin position="60"/>
        <end position="80"/>
    </location>
</feature>
<feature type="transmembrane region" description="Helical" evidence="1">
    <location>
        <begin position="128"/>
        <end position="148"/>
    </location>
</feature>
<feature type="transmembrane region" description="Helical" evidence="1">
    <location>
        <begin position="167"/>
        <end position="187"/>
    </location>
</feature>
<feature type="transmembrane region" description="Helical" evidence="1">
    <location>
        <begin position="247"/>
        <end position="267"/>
    </location>
</feature>
<feature type="transmembrane region" description="Helical" evidence="1">
    <location>
        <begin position="276"/>
        <end position="296"/>
    </location>
</feature>
<feature type="transmembrane region" description="Helical" evidence="1">
    <location>
        <begin position="331"/>
        <end position="351"/>
    </location>
</feature>
<feature type="transmembrane region" description="Helical" evidence="1">
    <location>
        <begin position="361"/>
        <end position="381"/>
    </location>
</feature>
<feature type="transmembrane region" description="Helical" evidence="1">
    <location>
        <begin position="383"/>
        <end position="403"/>
    </location>
</feature>
<feature type="transmembrane region" description="Helical" evidence="1">
    <location>
        <begin position="423"/>
        <end position="443"/>
    </location>
</feature>
<feature type="transmembrane region" description="Helical" evidence="1">
    <location>
        <begin position="492"/>
        <end position="512"/>
    </location>
</feature>
<feature type="transmembrane region" description="Helical" evidence="1">
    <location>
        <begin position="530"/>
        <end position="550"/>
    </location>
</feature>
<accession>C4LDL6</accession>
<keyword id="KW-0997">Cell inner membrane</keyword>
<keyword id="KW-1003">Cell membrane</keyword>
<keyword id="KW-0406">Ion transport</keyword>
<keyword id="KW-0472">Membrane</keyword>
<keyword id="KW-0630">Potassium</keyword>
<keyword id="KW-0633">Potassium transport</keyword>
<keyword id="KW-1185">Reference proteome</keyword>
<keyword id="KW-0812">Transmembrane</keyword>
<keyword id="KW-1133">Transmembrane helix</keyword>
<keyword id="KW-0813">Transport</keyword>
<name>KDPA_TOLAT</name>
<reference key="1">
    <citation type="submission" date="2009-05" db="EMBL/GenBank/DDBJ databases">
        <title>Complete sequence of Tolumonas auensis DSM 9187.</title>
        <authorList>
            <consortium name="US DOE Joint Genome Institute"/>
            <person name="Lucas S."/>
            <person name="Copeland A."/>
            <person name="Lapidus A."/>
            <person name="Glavina del Rio T."/>
            <person name="Tice H."/>
            <person name="Bruce D."/>
            <person name="Goodwin L."/>
            <person name="Pitluck S."/>
            <person name="Chertkov O."/>
            <person name="Brettin T."/>
            <person name="Detter J.C."/>
            <person name="Han C."/>
            <person name="Larimer F."/>
            <person name="Land M."/>
            <person name="Hauser L."/>
            <person name="Kyrpides N."/>
            <person name="Mikhailova N."/>
            <person name="Spring S."/>
            <person name="Beller H."/>
        </authorList>
    </citation>
    <scope>NUCLEOTIDE SEQUENCE [LARGE SCALE GENOMIC DNA]</scope>
    <source>
        <strain>DSM 9187 / NBRC 110442 / TA 4</strain>
    </source>
</reference>
<gene>
    <name evidence="1" type="primary">kdpA</name>
    <name type="ordered locus">Tola_1192</name>
</gene>
<organism>
    <name type="scientific">Tolumonas auensis (strain DSM 9187 / NBRC 110442 / TA 4)</name>
    <dbReference type="NCBI Taxonomy" id="595494"/>
    <lineage>
        <taxon>Bacteria</taxon>
        <taxon>Pseudomonadati</taxon>
        <taxon>Pseudomonadota</taxon>
        <taxon>Gammaproteobacteria</taxon>
        <taxon>Aeromonadales</taxon>
        <taxon>Aeromonadaceae</taxon>
        <taxon>Tolumonas</taxon>
    </lineage>
</organism>
<comment type="function">
    <text evidence="1">Part of the high-affinity ATP-driven potassium transport (or Kdp) system, which catalyzes the hydrolysis of ATP coupled with the electrogenic transport of potassium into the cytoplasm. This subunit binds the periplasmic potassium ions and delivers the ions to the membrane domain of KdpB through an intramembrane tunnel.</text>
</comment>
<comment type="subunit">
    <text evidence="1">The system is composed of three essential subunits: KdpA, KdpB and KdpC.</text>
</comment>
<comment type="subcellular location">
    <subcellularLocation>
        <location evidence="1">Cell inner membrane</location>
        <topology evidence="1">Multi-pass membrane protein</topology>
    </subcellularLocation>
</comment>
<comment type="similarity">
    <text evidence="1">Belongs to the KdpA family.</text>
</comment>
<evidence type="ECO:0000255" key="1">
    <source>
        <dbReference type="HAMAP-Rule" id="MF_00275"/>
    </source>
</evidence>
<sequence length="566" mass="60301">MFSSGVALLTSYMLVLLLLAWPLGIALTRLVDDRLPLWLIRVESHIKFLENSQMKWQTYAAAILVFNLLGAALLFLLMLFQGSLPLNPLHLPDVSPLLAMNTAISFITNTNWQAYAGETTLSPLSQMLGLTVHNFLSAANGIAVAFVLMRALTRTGSQQLGNAWVDIWRITVYLLLPLSVIYALFLAQQGVVQSLMAQISVPGLSGVEQHIPLGPVASQEAIKMLGTNGGGYFNANSAHPFENPTALTNFVQMVSILLIPAALCICFGRVAGDNRVGSALLWTMGIMLSVAALLIMWAESQGHPVLANLAVDQQMSAIQSGGNMEGKETRFGLWASSLFATITTAASCGAVNAMHDSLTPLGGLIPMVLMQLGEVVFGGVGSGWYGMMLFVFLTVFLAGLMIGRTPEYLGKKIEIYEMKMVTIGLLIPPALVLLGTALAVILPQGLVSLQESGAHGFSEMLYAFSSAANNNGSAFAGLNSNTPFMNITLAVLMFVGRFGVMLPVLAIAGALIEKRHQPASAGSLACHGPLFVGMLIGVVLLIGALTFIPALALGPIVEHLTLWQTH</sequence>
<protein>
    <recommendedName>
        <fullName evidence="1">Potassium-transporting ATPase potassium-binding subunit</fullName>
    </recommendedName>
    <alternativeName>
        <fullName evidence="1">ATP phosphohydrolase [potassium-transporting] A chain</fullName>
    </alternativeName>
    <alternativeName>
        <fullName evidence="1">Potassium-binding and translocating subunit A</fullName>
    </alternativeName>
    <alternativeName>
        <fullName evidence="1">Potassium-translocating ATPase A chain</fullName>
    </alternativeName>
</protein>